<protein>
    <recommendedName>
        <fullName evidence="1">S-adenosylmethionine:tRNA ribosyltransferase-isomerase</fullName>
        <ecNumber evidence="1">2.4.99.17</ecNumber>
    </recommendedName>
    <alternativeName>
        <fullName evidence="1">Queuosine biosynthesis protein QueA</fullName>
    </alternativeName>
</protein>
<keyword id="KW-0963">Cytoplasm</keyword>
<keyword id="KW-0671">Queuosine biosynthesis</keyword>
<keyword id="KW-0949">S-adenosyl-L-methionine</keyword>
<keyword id="KW-0808">Transferase</keyword>
<accession>B5XM46</accession>
<gene>
    <name evidence="1" type="primary">queA</name>
    <name type="ordered locus">Spy49_1116</name>
</gene>
<evidence type="ECO:0000255" key="1">
    <source>
        <dbReference type="HAMAP-Rule" id="MF_00113"/>
    </source>
</evidence>
<organism>
    <name type="scientific">Streptococcus pyogenes serotype M49 (strain NZ131)</name>
    <dbReference type="NCBI Taxonomy" id="471876"/>
    <lineage>
        <taxon>Bacteria</taxon>
        <taxon>Bacillati</taxon>
        <taxon>Bacillota</taxon>
        <taxon>Bacilli</taxon>
        <taxon>Lactobacillales</taxon>
        <taxon>Streptococcaceae</taxon>
        <taxon>Streptococcus</taxon>
    </lineage>
</organism>
<sequence>MNTNDFDFELPEELIAQTPLEKRDSSKLLIIDHRQKTMVDSHFDHIIDQLNPGDALVMNNTRVLPARLYGEKTDTHGHVELLLLKNTQGDQWEVLAKPAKRLKVGSQVNFGDGHLKATIIDELEHGGRIVEFSYDGIFLEVLESLGEMPLPPYIHEKLEDAERYQTVYAKENGSAAAPTAGLHFTTDLLKKIEAKGVHLVYLTLHVGLGTFRPVSVDNLDEHDMHSEFYSLSEEAAQTLRDVKQAGGRVVAVGTTSIRTLETIGSKFQGDIQADSGWTNIFIKPGYQFKVVDAFSTNFHLPKSTLVMLVSAFAGRDFVLEAYRHAVDEKYRFFSFGDAMFVN</sequence>
<dbReference type="EC" id="2.4.99.17" evidence="1"/>
<dbReference type="EMBL" id="CP000829">
    <property type="protein sequence ID" value="ACI61408.1"/>
    <property type="molecule type" value="Genomic_DNA"/>
</dbReference>
<dbReference type="SMR" id="B5XM46"/>
<dbReference type="KEGG" id="soz:Spy49_1116"/>
<dbReference type="HOGENOM" id="CLU_039110_1_0_9"/>
<dbReference type="UniPathway" id="UPA00392"/>
<dbReference type="Proteomes" id="UP000001039">
    <property type="component" value="Chromosome"/>
</dbReference>
<dbReference type="GO" id="GO:0005737">
    <property type="term" value="C:cytoplasm"/>
    <property type="evidence" value="ECO:0007669"/>
    <property type="project" value="UniProtKB-SubCell"/>
</dbReference>
<dbReference type="GO" id="GO:0051075">
    <property type="term" value="F:S-adenosylmethionine:tRNA ribosyltransferase-isomerase activity"/>
    <property type="evidence" value="ECO:0007669"/>
    <property type="project" value="UniProtKB-EC"/>
</dbReference>
<dbReference type="GO" id="GO:0008616">
    <property type="term" value="P:queuosine biosynthetic process"/>
    <property type="evidence" value="ECO:0007669"/>
    <property type="project" value="UniProtKB-UniRule"/>
</dbReference>
<dbReference type="GO" id="GO:0002099">
    <property type="term" value="P:tRNA wobble guanine modification"/>
    <property type="evidence" value="ECO:0007669"/>
    <property type="project" value="TreeGrafter"/>
</dbReference>
<dbReference type="FunFam" id="2.40.10.240:FF:000002">
    <property type="entry name" value="S-adenosylmethionine:tRNA ribosyltransferase-isomerase"/>
    <property type="match status" value="1"/>
</dbReference>
<dbReference type="FunFam" id="3.40.1780.10:FF:000001">
    <property type="entry name" value="S-adenosylmethionine:tRNA ribosyltransferase-isomerase"/>
    <property type="match status" value="1"/>
</dbReference>
<dbReference type="Gene3D" id="2.40.10.240">
    <property type="entry name" value="QueA-like"/>
    <property type="match status" value="1"/>
</dbReference>
<dbReference type="Gene3D" id="3.40.1780.10">
    <property type="entry name" value="QueA-like"/>
    <property type="match status" value="1"/>
</dbReference>
<dbReference type="HAMAP" id="MF_00113">
    <property type="entry name" value="QueA"/>
    <property type="match status" value="1"/>
</dbReference>
<dbReference type="InterPro" id="IPR003699">
    <property type="entry name" value="QueA"/>
</dbReference>
<dbReference type="InterPro" id="IPR042118">
    <property type="entry name" value="QueA_dom1"/>
</dbReference>
<dbReference type="InterPro" id="IPR042119">
    <property type="entry name" value="QueA_dom2"/>
</dbReference>
<dbReference type="InterPro" id="IPR036100">
    <property type="entry name" value="QueA_sf"/>
</dbReference>
<dbReference type="NCBIfam" id="NF001140">
    <property type="entry name" value="PRK00147.1"/>
    <property type="match status" value="1"/>
</dbReference>
<dbReference type="NCBIfam" id="TIGR00113">
    <property type="entry name" value="queA"/>
    <property type="match status" value="1"/>
</dbReference>
<dbReference type="PANTHER" id="PTHR30307">
    <property type="entry name" value="S-ADENOSYLMETHIONINE:TRNA RIBOSYLTRANSFERASE-ISOMERASE"/>
    <property type="match status" value="1"/>
</dbReference>
<dbReference type="PANTHER" id="PTHR30307:SF0">
    <property type="entry name" value="S-ADENOSYLMETHIONINE:TRNA RIBOSYLTRANSFERASE-ISOMERASE"/>
    <property type="match status" value="1"/>
</dbReference>
<dbReference type="Pfam" id="PF02547">
    <property type="entry name" value="Queuosine_synth"/>
    <property type="match status" value="1"/>
</dbReference>
<dbReference type="SUPFAM" id="SSF111337">
    <property type="entry name" value="QueA-like"/>
    <property type="match status" value="1"/>
</dbReference>
<reference key="1">
    <citation type="journal article" date="2008" name="J. Bacteriol.">
        <title>Genome sequence of a nephritogenic and highly transformable M49 strain of Streptococcus pyogenes.</title>
        <authorList>
            <person name="McShan W.M."/>
            <person name="Ferretti J.J."/>
            <person name="Karasawa T."/>
            <person name="Suvorov A.N."/>
            <person name="Lin S."/>
            <person name="Qin B."/>
            <person name="Jia H."/>
            <person name="Kenton S."/>
            <person name="Najar F."/>
            <person name="Wu H."/>
            <person name="Scott J."/>
            <person name="Roe B.A."/>
            <person name="Savic D.J."/>
        </authorList>
    </citation>
    <scope>NUCLEOTIDE SEQUENCE [LARGE SCALE GENOMIC DNA]</scope>
    <source>
        <strain>NZ131</strain>
    </source>
</reference>
<comment type="function">
    <text evidence="1">Transfers and isomerizes the ribose moiety from AdoMet to the 7-aminomethyl group of 7-deazaguanine (preQ1-tRNA) to give epoxyqueuosine (oQ-tRNA).</text>
</comment>
<comment type="catalytic activity">
    <reaction evidence="1">
        <text>7-aminomethyl-7-carbaguanosine(34) in tRNA + S-adenosyl-L-methionine = epoxyqueuosine(34) in tRNA + adenine + L-methionine + 2 H(+)</text>
        <dbReference type="Rhea" id="RHEA:32155"/>
        <dbReference type="Rhea" id="RHEA-COMP:10342"/>
        <dbReference type="Rhea" id="RHEA-COMP:18582"/>
        <dbReference type="ChEBI" id="CHEBI:15378"/>
        <dbReference type="ChEBI" id="CHEBI:16708"/>
        <dbReference type="ChEBI" id="CHEBI:57844"/>
        <dbReference type="ChEBI" id="CHEBI:59789"/>
        <dbReference type="ChEBI" id="CHEBI:82833"/>
        <dbReference type="ChEBI" id="CHEBI:194443"/>
        <dbReference type="EC" id="2.4.99.17"/>
    </reaction>
</comment>
<comment type="pathway">
    <text evidence="1">tRNA modification; tRNA-queuosine biosynthesis.</text>
</comment>
<comment type="subunit">
    <text evidence="1">Monomer.</text>
</comment>
<comment type="subcellular location">
    <subcellularLocation>
        <location evidence="1">Cytoplasm</location>
    </subcellularLocation>
</comment>
<comment type="similarity">
    <text evidence="1">Belongs to the QueA family.</text>
</comment>
<proteinExistence type="inferred from homology"/>
<feature type="chain" id="PRO_1000094822" description="S-adenosylmethionine:tRNA ribosyltransferase-isomerase">
    <location>
        <begin position="1"/>
        <end position="342"/>
    </location>
</feature>
<name>QUEA_STRPZ</name>